<feature type="chain" id="PRO_0000124951" description="Large ribosomal subunit protein uL5">
    <location>
        <begin position="1"/>
        <end position="180"/>
    </location>
</feature>
<proteinExistence type="inferred from homology"/>
<name>RL5_MYCMS</name>
<evidence type="ECO:0000255" key="1">
    <source>
        <dbReference type="HAMAP-Rule" id="MF_01333"/>
    </source>
</evidence>
<evidence type="ECO:0000305" key="2"/>
<dbReference type="EMBL" id="BX293980">
    <property type="protein sequence ID" value="CAE77350.1"/>
    <property type="molecule type" value="Genomic_DNA"/>
</dbReference>
<dbReference type="RefSeq" id="NP_975708.1">
    <property type="nucleotide sequence ID" value="NC_005364.2"/>
</dbReference>
<dbReference type="RefSeq" id="WP_011166900.1">
    <property type="nucleotide sequence ID" value="NC_005364.2"/>
</dbReference>
<dbReference type="SMR" id="Q6MSN8"/>
<dbReference type="STRING" id="272632.MSC_0732"/>
<dbReference type="KEGG" id="mmy:MSC_0732"/>
<dbReference type="PATRIC" id="fig|272632.4.peg.790"/>
<dbReference type="eggNOG" id="COG0094">
    <property type="taxonomic scope" value="Bacteria"/>
</dbReference>
<dbReference type="HOGENOM" id="CLU_061015_2_1_14"/>
<dbReference type="Proteomes" id="UP000001016">
    <property type="component" value="Chromosome"/>
</dbReference>
<dbReference type="GO" id="GO:1990904">
    <property type="term" value="C:ribonucleoprotein complex"/>
    <property type="evidence" value="ECO:0007669"/>
    <property type="project" value="UniProtKB-KW"/>
</dbReference>
<dbReference type="GO" id="GO:0005840">
    <property type="term" value="C:ribosome"/>
    <property type="evidence" value="ECO:0007669"/>
    <property type="project" value="UniProtKB-KW"/>
</dbReference>
<dbReference type="GO" id="GO:0019843">
    <property type="term" value="F:rRNA binding"/>
    <property type="evidence" value="ECO:0007669"/>
    <property type="project" value="UniProtKB-UniRule"/>
</dbReference>
<dbReference type="GO" id="GO:0003735">
    <property type="term" value="F:structural constituent of ribosome"/>
    <property type="evidence" value="ECO:0007669"/>
    <property type="project" value="InterPro"/>
</dbReference>
<dbReference type="GO" id="GO:0000049">
    <property type="term" value="F:tRNA binding"/>
    <property type="evidence" value="ECO:0007669"/>
    <property type="project" value="UniProtKB-UniRule"/>
</dbReference>
<dbReference type="GO" id="GO:0006412">
    <property type="term" value="P:translation"/>
    <property type="evidence" value="ECO:0007669"/>
    <property type="project" value="UniProtKB-UniRule"/>
</dbReference>
<dbReference type="FunFam" id="3.30.1440.10:FF:000001">
    <property type="entry name" value="50S ribosomal protein L5"/>
    <property type="match status" value="1"/>
</dbReference>
<dbReference type="Gene3D" id="3.30.1440.10">
    <property type="match status" value="1"/>
</dbReference>
<dbReference type="HAMAP" id="MF_01333_B">
    <property type="entry name" value="Ribosomal_uL5_B"/>
    <property type="match status" value="1"/>
</dbReference>
<dbReference type="InterPro" id="IPR002132">
    <property type="entry name" value="Ribosomal_uL5"/>
</dbReference>
<dbReference type="InterPro" id="IPR020930">
    <property type="entry name" value="Ribosomal_uL5_bac-type"/>
</dbReference>
<dbReference type="InterPro" id="IPR031309">
    <property type="entry name" value="Ribosomal_uL5_C"/>
</dbReference>
<dbReference type="InterPro" id="IPR020929">
    <property type="entry name" value="Ribosomal_uL5_CS"/>
</dbReference>
<dbReference type="InterPro" id="IPR022803">
    <property type="entry name" value="Ribosomal_uL5_dom_sf"/>
</dbReference>
<dbReference type="InterPro" id="IPR031310">
    <property type="entry name" value="Ribosomal_uL5_N"/>
</dbReference>
<dbReference type="NCBIfam" id="NF000585">
    <property type="entry name" value="PRK00010.1"/>
    <property type="match status" value="1"/>
</dbReference>
<dbReference type="PANTHER" id="PTHR11994">
    <property type="entry name" value="60S RIBOSOMAL PROTEIN L11-RELATED"/>
    <property type="match status" value="1"/>
</dbReference>
<dbReference type="Pfam" id="PF00281">
    <property type="entry name" value="Ribosomal_L5"/>
    <property type="match status" value="1"/>
</dbReference>
<dbReference type="Pfam" id="PF00673">
    <property type="entry name" value="Ribosomal_L5_C"/>
    <property type="match status" value="1"/>
</dbReference>
<dbReference type="PIRSF" id="PIRSF002161">
    <property type="entry name" value="Ribosomal_L5"/>
    <property type="match status" value="1"/>
</dbReference>
<dbReference type="SUPFAM" id="SSF55282">
    <property type="entry name" value="RL5-like"/>
    <property type="match status" value="1"/>
</dbReference>
<dbReference type="PROSITE" id="PS00358">
    <property type="entry name" value="RIBOSOMAL_L5"/>
    <property type="match status" value="1"/>
</dbReference>
<protein>
    <recommendedName>
        <fullName evidence="1">Large ribosomal subunit protein uL5</fullName>
    </recommendedName>
    <alternativeName>
        <fullName evidence="2">50S ribosomal protein L5</fullName>
    </alternativeName>
</protein>
<accession>Q6MSN8</accession>
<reference key="1">
    <citation type="journal article" date="2004" name="Genome Res.">
        <title>The genome sequence of Mycoplasma mycoides subsp. mycoides SC type strain PG1T, the causative agent of contagious bovine pleuropneumonia (CBPP).</title>
        <authorList>
            <person name="Westberg J."/>
            <person name="Persson A."/>
            <person name="Holmberg A."/>
            <person name="Goesmann A."/>
            <person name="Lundeberg J."/>
            <person name="Johansson K.-E."/>
            <person name="Pettersson B."/>
            <person name="Uhlen M."/>
        </authorList>
    </citation>
    <scope>NUCLEOTIDE SEQUENCE [LARGE SCALE GENOMIC DNA]</scope>
    <source>
        <strain>CCUG 32753 / NCTC 10114 / PG1</strain>
    </source>
</reference>
<organism>
    <name type="scientific">Mycoplasma mycoides subsp. mycoides SC (strain CCUG 32753 / NCTC 10114 / PG1)</name>
    <dbReference type="NCBI Taxonomy" id="272632"/>
    <lineage>
        <taxon>Bacteria</taxon>
        <taxon>Bacillati</taxon>
        <taxon>Mycoplasmatota</taxon>
        <taxon>Mollicutes</taxon>
        <taxon>Mycoplasmataceae</taxon>
        <taxon>Mycoplasma</taxon>
    </lineage>
</organism>
<comment type="function">
    <text evidence="1">This is one of the proteins that bind and probably mediate the attachment of the 5S RNA into the large ribosomal subunit, where it forms part of the central protuberance. In the 70S ribosome it contacts protein S13 of the 30S subunit (bridge B1b), connecting the 2 subunits; this bridge is implicated in subunit movement. Contacts the P site tRNA; the 5S rRNA and some of its associated proteins might help stabilize positioning of ribosome-bound tRNAs.</text>
</comment>
<comment type="subunit">
    <text evidence="1">Part of the 50S ribosomal subunit; part of the 5S rRNA/L5/L18/L25 subcomplex. Contacts the 5S rRNA and the P site tRNA. Forms a bridge to the 30S subunit in the 70S ribosome.</text>
</comment>
<comment type="similarity">
    <text evidence="1">Belongs to the universal ribosomal protein uL5 family.</text>
</comment>
<keyword id="KW-1185">Reference proteome</keyword>
<keyword id="KW-0687">Ribonucleoprotein</keyword>
<keyword id="KW-0689">Ribosomal protein</keyword>
<keyword id="KW-0694">RNA-binding</keyword>
<keyword id="KW-0699">rRNA-binding</keyword>
<keyword id="KW-0820">tRNA-binding</keyword>
<sequence>MKSRLEIKYKDQIVPELFKELNYKSIMQVPKIQKIVINMGIGDATTDPKKLDAAISELEKLSGQKPIVTKAKKSLAVFKLREGMAIGAKVTLRGKKMYDFLDKLINVALPRVRDFRGVSKTSFDGFGNFTTGIKEQIIFPEVDYDKVIRLRGMDITIVTSAKTNKEAFALLQKVGMPFEK</sequence>
<gene>
    <name evidence="1" type="primary">rplE</name>
    <name type="ordered locus">MSC_0732</name>
</gene>